<comment type="function">
    <text evidence="1">Methyltransferase required for the conversion of demethylmenaquinol (DMKH2) to menaquinol (MKH2) and the conversion of 2-polyprenyl-6-methoxy-1,4-benzoquinol (DDMQH2) to 2-polyprenyl-3-methyl-6-methoxy-1,4-benzoquinol (DMQH2).</text>
</comment>
<comment type="catalytic activity">
    <reaction evidence="1">
        <text>a 2-demethylmenaquinol + S-adenosyl-L-methionine = a menaquinol + S-adenosyl-L-homocysteine + H(+)</text>
        <dbReference type="Rhea" id="RHEA:42640"/>
        <dbReference type="Rhea" id="RHEA-COMP:9539"/>
        <dbReference type="Rhea" id="RHEA-COMP:9563"/>
        <dbReference type="ChEBI" id="CHEBI:15378"/>
        <dbReference type="ChEBI" id="CHEBI:18151"/>
        <dbReference type="ChEBI" id="CHEBI:55437"/>
        <dbReference type="ChEBI" id="CHEBI:57856"/>
        <dbReference type="ChEBI" id="CHEBI:59789"/>
        <dbReference type="EC" id="2.1.1.163"/>
    </reaction>
</comment>
<comment type="catalytic activity">
    <reaction evidence="1">
        <text>a 2-methoxy-6-(all-trans-polyprenyl)benzene-1,4-diol + S-adenosyl-L-methionine = a 5-methoxy-2-methyl-3-(all-trans-polyprenyl)benzene-1,4-diol + S-adenosyl-L-homocysteine + H(+)</text>
        <dbReference type="Rhea" id="RHEA:28286"/>
        <dbReference type="Rhea" id="RHEA-COMP:10858"/>
        <dbReference type="Rhea" id="RHEA-COMP:10859"/>
        <dbReference type="ChEBI" id="CHEBI:15378"/>
        <dbReference type="ChEBI" id="CHEBI:57856"/>
        <dbReference type="ChEBI" id="CHEBI:59789"/>
        <dbReference type="ChEBI" id="CHEBI:84166"/>
        <dbReference type="ChEBI" id="CHEBI:84167"/>
        <dbReference type="EC" id="2.1.1.201"/>
    </reaction>
</comment>
<comment type="pathway">
    <text evidence="1">Quinol/quinone metabolism; menaquinone biosynthesis; menaquinol from 1,4-dihydroxy-2-naphthoate: step 2/2.</text>
</comment>
<comment type="pathway">
    <text evidence="1">Cofactor biosynthesis; ubiquinone biosynthesis.</text>
</comment>
<comment type="similarity">
    <text evidence="1">Belongs to the class I-like SAM-binding methyltransferase superfamily. MenG/UbiE family.</text>
</comment>
<keyword id="KW-0474">Menaquinone biosynthesis</keyword>
<keyword id="KW-0489">Methyltransferase</keyword>
<keyword id="KW-1185">Reference proteome</keyword>
<keyword id="KW-0949">S-adenosyl-L-methionine</keyword>
<keyword id="KW-0808">Transferase</keyword>
<keyword id="KW-0831">Ubiquinone biosynthesis</keyword>
<accession>A7MQL7</accession>
<proteinExistence type="inferred from homology"/>
<name>UBIE_CROS8</name>
<protein>
    <recommendedName>
        <fullName evidence="1">Ubiquinone/menaquinone biosynthesis C-methyltransferase UbiE</fullName>
        <ecNumber evidence="1">2.1.1.163</ecNumber>
        <ecNumber evidence="1">2.1.1.201</ecNumber>
    </recommendedName>
    <alternativeName>
        <fullName evidence="1">2-methoxy-6-polyprenyl-1,4-benzoquinol methylase</fullName>
    </alternativeName>
    <alternativeName>
        <fullName evidence="1">Demethylmenaquinone methyltransferase</fullName>
    </alternativeName>
</protein>
<reference key="1">
    <citation type="journal article" date="2010" name="PLoS ONE">
        <title>Genome sequence of Cronobacter sakazakii BAA-894 and comparative genomic hybridization analysis with other Cronobacter species.</title>
        <authorList>
            <person name="Kucerova E."/>
            <person name="Clifton S.W."/>
            <person name="Xia X.Q."/>
            <person name="Long F."/>
            <person name="Porwollik S."/>
            <person name="Fulton L."/>
            <person name="Fronick C."/>
            <person name="Minx P."/>
            <person name="Kyung K."/>
            <person name="Warren W."/>
            <person name="Fulton R."/>
            <person name="Feng D."/>
            <person name="Wollam A."/>
            <person name="Shah N."/>
            <person name="Bhonagiri V."/>
            <person name="Nash W.E."/>
            <person name="Hallsworth-Pepin K."/>
            <person name="Wilson R.K."/>
            <person name="McClelland M."/>
            <person name="Forsythe S.J."/>
        </authorList>
    </citation>
    <scope>NUCLEOTIDE SEQUENCE [LARGE SCALE GENOMIC DNA]</scope>
    <source>
        <strain>ATCC BAA-894</strain>
    </source>
</reference>
<organism>
    <name type="scientific">Cronobacter sakazakii (strain ATCC BAA-894)</name>
    <name type="common">Enterobacter sakazakii</name>
    <dbReference type="NCBI Taxonomy" id="290339"/>
    <lineage>
        <taxon>Bacteria</taxon>
        <taxon>Pseudomonadati</taxon>
        <taxon>Pseudomonadota</taxon>
        <taxon>Gammaproteobacteria</taxon>
        <taxon>Enterobacterales</taxon>
        <taxon>Enterobacteriaceae</taxon>
        <taxon>Cronobacter</taxon>
    </lineage>
</organism>
<dbReference type="EC" id="2.1.1.163" evidence="1"/>
<dbReference type="EC" id="2.1.1.201" evidence="1"/>
<dbReference type="EMBL" id="CP000783">
    <property type="protein sequence ID" value="ABU78924.1"/>
    <property type="molecule type" value="Genomic_DNA"/>
</dbReference>
<dbReference type="RefSeq" id="WP_004385518.1">
    <property type="nucleotide sequence ID" value="NC_009778.1"/>
</dbReference>
<dbReference type="SMR" id="A7MQL7"/>
<dbReference type="GeneID" id="56732380"/>
<dbReference type="KEGG" id="esa:ESA_03727"/>
<dbReference type="HOGENOM" id="CLU_037990_0_0_6"/>
<dbReference type="UniPathway" id="UPA00079">
    <property type="reaction ID" value="UER00169"/>
</dbReference>
<dbReference type="UniPathway" id="UPA00232"/>
<dbReference type="Proteomes" id="UP000000260">
    <property type="component" value="Chromosome"/>
</dbReference>
<dbReference type="GO" id="GO:0008425">
    <property type="term" value="F:2-methoxy-6-polyprenyl-1,4-benzoquinol methyltransferase activity"/>
    <property type="evidence" value="ECO:0007669"/>
    <property type="project" value="UniProtKB-UniRule"/>
</dbReference>
<dbReference type="GO" id="GO:0043770">
    <property type="term" value="F:demethylmenaquinone methyltransferase activity"/>
    <property type="evidence" value="ECO:0007669"/>
    <property type="project" value="UniProtKB-UniRule"/>
</dbReference>
<dbReference type="GO" id="GO:0009060">
    <property type="term" value="P:aerobic respiration"/>
    <property type="evidence" value="ECO:0007669"/>
    <property type="project" value="UniProtKB-UniRule"/>
</dbReference>
<dbReference type="GO" id="GO:0009234">
    <property type="term" value="P:menaquinone biosynthetic process"/>
    <property type="evidence" value="ECO:0007669"/>
    <property type="project" value="UniProtKB-UniRule"/>
</dbReference>
<dbReference type="GO" id="GO:0032259">
    <property type="term" value="P:methylation"/>
    <property type="evidence" value="ECO:0007669"/>
    <property type="project" value="UniProtKB-KW"/>
</dbReference>
<dbReference type="CDD" id="cd02440">
    <property type="entry name" value="AdoMet_MTases"/>
    <property type="match status" value="1"/>
</dbReference>
<dbReference type="FunFam" id="3.40.50.150:FF:000014">
    <property type="entry name" value="Ubiquinone/menaquinone biosynthesis C-methyltransferase UbiE"/>
    <property type="match status" value="1"/>
</dbReference>
<dbReference type="Gene3D" id="3.40.50.150">
    <property type="entry name" value="Vaccinia Virus protein VP39"/>
    <property type="match status" value="1"/>
</dbReference>
<dbReference type="HAMAP" id="MF_01813">
    <property type="entry name" value="MenG_UbiE_methyltr"/>
    <property type="match status" value="1"/>
</dbReference>
<dbReference type="InterPro" id="IPR029063">
    <property type="entry name" value="SAM-dependent_MTases_sf"/>
</dbReference>
<dbReference type="InterPro" id="IPR004033">
    <property type="entry name" value="UbiE/COQ5_MeTrFase"/>
</dbReference>
<dbReference type="InterPro" id="IPR023576">
    <property type="entry name" value="UbiE/COQ5_MeTrFase_CS"/>
</dbReference>
<dbReference type="NCBIfam" id="TIGR01934">
    <property type="entry name" value="MenG_MenH_UbiE"/>
    <property type="match status" value="1"/>
</dbReference>
<dbReference type="NCBIfam" id="NF001240">
    <property type="entry name" value="PRK00216.1-1"/>
    <property type="match status" value="1"/>
</dbReference>
<dbReference type="NCBIfam" id="NF001242">
    <property type="entry name" value="PRK00216.1-3"/>
    <property type="match status" value="1"/>
</dbReference>
<dbReference type="NCBIfam" id="NF001244">
    <property type="entry name" value="PRK00216.1-5"/>
    <property type="match status" value="1"/>
</dbReference>
<dbReference type="PANTHER" id="PTHR43591:SF24">
    <property type="entry name" value="2-METHOXY-6-POLYPRENYL-1,4-BENZOQUINOL METHYLASE, MITOCHONDRIAL"/>
    <property type="match status" value="1"/>
</dbReference>
<dbReference type="PANTHER" id="PTHR43591">
    <property type="entry name" value="METHYLTRANSFERASE"/>
    <property type="match status" value="1"/>
</dbReference>
<dbReference type="Pfam" id="PF01209">
    <property type="entry name" value="Ubie_methyltran"/>
    <property type="match status" value="1"/>
</dbReference>
<dbReference type="SUPFAM" id="SSF53335">
    <property type="entry name" value="S-adenosyl-L-methionine-dependent methyltransferases"/>
    <property type="match status" value="1"/>
</dbReference>
<dbReference type="PROSITE" id="PS51608">
    <property type="entry name" value="SAM_MT_UBIE"/>
    <property type="match status" value="1"/>
</dbReference>
<dbReference type="PROSITE" id="PS01183">
    <property type="entry name" value="UBIE_1"/>
    <property type="match status" value="1"/>
</dbReference>
<dbReference type="PROSITE" id="PS01184">
    <property type="entry name" value="UBIE_2"/>
    <property type="match status" value="1"/>
</dbReference>
<gene>
    <name evidence="1" type="primary">ubiE</name>
    <name type="ordered locus">ESA_03727</name>
</gene>
<sequence length="251" mass="28121">MVEDSQDTTHFGFQTVAKEQKADMVAQVFHSVAAKYDVMNDLMSFGIHRLWKRFTIDCSGVRRGQKVLDLAGGTGDLTAKFSRLVGESGKVVLADINDSMLKMGREKLRNIGIVGNVEYVQANAEALPFPDNTFDCITISFGLRNVTDKEKALRSMFRVLKPGGRLLVLEFSKPVFEPLNKAYDAYSFHILPRVGELVAKDAGSYRYLAESIRMHPDQETLKAMMNDAGFENVNYYNMTGGIVALHRGYKF</sequence>
<evidence type="ECO:0000255" key="1">
    <source>
        <dbReference type="HAMAP-Rule" id="MF_01813"/>
    </source>
</evidence>
<feature type="chain" id="PRO_1000056247" description="Ubiquinone/menaquinone biosynthesis C-methyltransferase UbiE">
    <location>
        <begin position="1"/>
        <end position="251"/>
    </location>
</feature>
<feature type="binding site" evidence="1">
    <location>
        <position position="74"/>
    </location>
    <ligand>
        <name>S-adenosyl-L-methionine</name>
        <dbReference type="ChEBI" id="CHEBI:59789"/>
    </ligand>
</feature>
<feature type="binding site" evidence="1">
    <location>
        <position position="95"/>
    </location>
    <ligand>
        <name>S-adenosyl-L-methionine</name>
        <dbReference type="ChEBI" id="CHEBI:59789"/>
    </ligand>
</feature>
<feature type="binding site" evidence="1">
    <location>
        <begin position="123"/>
        <end position="124"/>
    </location>
    <ligand>
        <name>S-adenosyl-L-methionine</name>
        <dbReference type="ChEBI" id="CHEBI:59789"/>
    </ligand>
</feature>
<feature type="binding site" evidence="1">
    <location>
        <position position="140"/>
    </location>
    <ligand>
        <name>S-adenosyl-L-methionine</name>
        <dbReference type="ChEBI" id="CHEBI:59789"/>
    </ligand>
</feature>